<dbReference type="EMBL" id="CU329672">
    <property type="protein sequence ID" value="CAA20364.1"/>
    <property type="molecule type" value="Genomic_DNA"/>
</dbReference>
<dbReference type="PIR" id="S10053">
    <property type="entry name" value="S10053"/>
</dbReference>
<dbReference type="PIR" id="T41535">
    <property type="entry name" value="T41535"/>
</dbReference>
<dbReference type="RefSeq" id="NP_588266.1">
    <property type="nucleotide sequence ID" value="NM_001023256.2"/>
</dbReference>
<dbReference type="PDB" id="8ESQ">
    <property type="method" value="EM"/>
    <property type="resolution" value="2.80 A"/>
    <property type="chains" value="8=1-51"/>
</dbReference>
<dbReference type="PDB" id="8ESR">
    <property type="method" value="EM"/>
    <property type="resolution" value="3.20 A"/>
    <property type="chains" value="8=1-51"/>
</dbReference>
<dbReference type="PDB" id="8ETC">
    <property type="method" value="EM"/>
    <property type="resolution" value="3.10 A"/>
    <property type="chains" value="8=1-51"/>
</dbReference>
<dbReference type="PDB" id="8EUG">
    <property type="method" value="EM"/>
    <property type="resolution" value="2.80 A"/>
    <property type="chains" value="8=1-51"/>
</dbReference>
<dbReference type="PDB" id="8EUI">
    <property type="method" value="EM"/>
    <property type="resolution" value="3.10 A"/>
    <property type="chains" value="8=1-51"/>
</dbReference>
<dbReference type="PDB" id="9AXT">
    <property type="method" value="EM"/>
    <property type="resolution" value="2.40 A"/>
    <property type="chains" value="Bx=1-51"/>
</dbReference>
<dbReference type="PDB" id="9AXU">
    <property type="method" value="EM"/>
    <property type="resolution" value="1.94 A"/>
    <property type="chains" value="x=1-51"/>
</dbReference>
<dbReference type="PDB" id="9AXV">
    <property type="method" value="EM"/>
    <property type="resolution" value="2.40 A"/>
    <property type="chains" value="Bx=1-51"/>
</dbReference>
<dbReference type="PDBsum" id="8ESQ"/>
<dbReference type="PDBsum" id="8ESR"/>
<dbReference type="PDBsum" id="8ETC"/>
<dbReference type="PDBsum" id="8EUG"/>
<dbReference type="PDBsum" id="8EUI"/>
<dbReference type="PDBsum" id="9AXT"/>
<dbReference type="PDBsum" id="9AXU"/>
<dbReference type="PDBsum" id="9AXV"/>
<dbReference type="EMDB" id="EMD-43972"/>
<dbReference type="EMDB" id="EMD-43973"/>
<dbReference type="EMDB" id="EMD-43976"/>
<dbReference type="SMR" id="P05767"/>
<dbReference type="BioGRID" id="275845">
    <property type="interactions" value="3"/>
</dbReference>
<dbReference type="FunCoup" id="P05767">
    <property type="interactions" value="274"/>
</dbReference>
<dbReference type="IntAct" id="P05767">
    <property type="interactions" value="2"/>
</dbReference>
<dbReference type="STRING" id="284812.P05767"/>
<dbReference type="iPTMnet" id="P05767"/>
<dbReference type="PaxDb" id="4896-SPCC663.04.1"/>
<dbReference type="EnsemblFungi" id="SPCC663.04.1">
    <property type="protein sequence ID" value="SPCC663.04.1:pep"/>
    <property type="gene ID" value="SPCC663.04"/>
</dbReference>
<dbReference type="PomBase" id="SPCC663.04">
    <property type="gene designation" value="rpl39"/>
</dbReference>
<dbReference type="VEuPathDB" id="FungiDB:SPCC663.04"/>
<dbReference type="eggNOG" id="KOG0002">
    <property type="taxonomic scope" value="Eukaryota"/>
</dbReference>
<dbReference type="HOGENOM" id="CLU_181948_3_0_1"/>
<dbReference type="InParanoid" id="P05767"/>
<dbReference type="OMA" id="RRTKMNI"/>
<dbReference type="PhylomeDB" id="P05767"/>
<dbReference type="Reactome" id="R-SPO-156827">
    <property type="pathway name" value="L13a-mediated translational silencing of Ceruloplasmin expression"/>
</dbReference>
<dbReference type="Reactome" id="R-SPO-1799339">
    <property type="pathway name" value="SRP-dependent cotranslational protein targeting to membrane"/>
</dbReference>
<dbReference type="Reactome" id="R-SPO-72689">
    <property type="pathway name" value="Formation of a pool of free 40S subunits"/>
</dbReference>
<dbReference type="Reactome" id="R-SPO-72706">
    <property type="pathway name" value="GTP hydrolysis and joining of the 60S ribosomal subunit"/>
</dbReference>
<dbReference type="Reactome" id="R-SPO-975956">
    <property type="pathway name" value="Nonsense Mediated Decay (NMD) independent of the Exon Junction Complex (EJC)"/>
</dbReference>
<dbReference type="Reactome" id="R-SPO-975957">
    <property type="pathway name" value="Nonsense Mediated Decay (NMD) enhanced by the Exon Junction Complex (EJC)"/>
</dbReference>
<dbReference type="PRO" id="PR:P05767"/>
<dbReference type="Proteomes" id="UP000002485">
    <property type="component" value="Chromosome III"/>
</dbReference>
<dbReference type="GO" id="GO:0022625">
    <property type="term" value="C:cytosolic large ribosomal subunit"/>
    <property type="evidence" value="ECO:0000269"/>
    <property type="project" value="PomBase"/>
</dbReference>
<dbReference type="GO" id="GO:0030684">
    <property type="term" value="C:preribosome"/>
    <property type="evidence" value="ECO:0000314"/>
    <property type="project" value="PomBase"/>
</dbReference>
<dbReference type="GO" id="GO:0003735">
    <property type="term" value="F:structural constituent of ribosome"/>
    <property type="evidence" value="ECO:0000266"/>
    <property type="project" value="PomBase"/>
</dbReference>
<dbReference type="GO" id="GO:0002181">
    <property type="term" value="P:cytoplasmic translation"/>
    <property type="evidence" value="ECO:0000266"/>
    <property type="project" value="PomBase"/>
</dbReference>
<dbReference type="FunFam" id="1.10.1620.10:FF:000001">
    <property type="entry name" value="60S ribosomal protein-like L39"/>
    <property type="match status" value="1"/>
</dbReference>
<dbReference type="Gene3D" id="1.10.1620.10">
    <property type="entry name" value="Ribosomal protein L39e"/>
    <property type="match status" value="1"/>
</dbReference>
<dbReference type="HAMAP" id="MF_00629">
    <property type="entry name" value="Ribosomal_eL39"/>
    <property type="match status" value="1"/>
</dbReference>
<dbReference type="InterPro" id="IPR000077">
    <property type="entry name" value="Ribosomal_eL39"/>
</dbReference>
<dbReference type="InterPro" id="IPR020083">
    <property type="entry name" value="Ribosomal_eL39_CS"/>
</dbReference>
<dbReference type="InterPro" id="IPR023626">
    <property type="entry name" value="Ribosomal_eL39_dom_sf"/>
</dbReference>
<dbReference type="PANTHER" id="PTHR19970:SF0">
    <property type="entry name" value="LARGE RIBOSOMAL SUBUNIT PROTEIN EL39"/>
    <property type="match status" value="1"/>
</dbReference>
<dbReference type="PANTHER" id="PTHR19970">
    <property type="entry name" value="RIBOSOMAL PROTEIN L39E"/>
    <property type="match status" value="1"/>
</dbReference>
<dbReference type="Pfam" id="PF00832">
    <property type="entry name" value="Ribosomal_L39"/>
    <property type="match status" value="1"/>
</dbReference>
<dbReference type="SUPFAM" id="SSF48662">
    <property type="entry name" value="Ribosomal protein L39e"/>
    <property type="match status" value="1"/>
</dbReference>
<dbReference type="PROSITE" id="PS00051">
    <property type="entry name" value="RIBOSOMAL_L39E"/>
    <property type="match status" value="1"/>
</dbReference>
<name>RL39_SCHPO</name>
<reference key="1">
    <citation type="journal article" date="2002" name="Nature">
        <title>The genome sequence of Schizosaccharomyces pombe.</title>
        <authorList>
            <person name="Wood V."/>
            <person name="Gwilliam R."/>
            <person name="Rajandream M.A."/>
            <person name="Lyne M.H."/>
            <person name="Lyne R."/>
            <person name="Stewart A."/>
            <person name="Sgouros J.G."/>
            <person name="Peat N."/>
            <person name="Hayles J."/>
            <person name="Baker S.G."/>
            <person name="Basham D."/>
            <person name="Bowman S."/>
            <person name="Brooks K."/>
            <person name="Brown D."/>
            <person name="Brown S."/>
            <person name="Chillingworth T."/>
            <person name="Churcher C.M."/>
            <person name="Collins M."/>
            <person name="Connor R."/>
            <person name="Cronin A."/>
            <person name="Davis P."/>
            <person name="Feltwell T."/>
            <person name="Fraser A."/>
            <person name="Gentles S."/>
            <person name="Goble A."/>
            <person name="Hamlin N."/>
            <person name="Harris D.E."/>
            <person name="Hidalgo J."/>
            <person name="Hodgson G."/>
            <person name="Holroyd S."/>
            <person name="Hornsby T."/>
            <person name="Howarth S."/>
            <person name="Huckle E.J."/>
            <person name="Hunt S."/>
            <person name="Jagels K."/>
            <person name="James K.D."/>
            <person name="Jones L."/>
            <person name="Jones M."/>
            <person name="Leather S."/>
            <person name="McDonald S."/>
            <person name="McLean J."/>
            <person name="Mooney P."/>
            <person name="Moule S."/>
            <person name="Mungall K.L."/>
            <person name="Murphy L.D."/>
            <person name="Niblett D."/>
            <person name="Odell C."/>
            <person name="Oliver K."/>
            <person name="O'Neil S."/>
            <person name="Pearson D."/>
            <person name="Quail M.A."/>
            <person name="Rabbinowitsch E."/>
            <person name="Rutherford K.M."/>
            <person name="Rutter S."/>
            <person name="Saunders D."/>
            <person name="Seeger K."/>
            <person name="Sharp S."/>
            <person name="Skelton J."/>
            <person name="Simmonds M.N."/>
            <person name="Squares R."/>
            <person name="Squares S."/>
            <person name="Stevens K."/>
            <person name="Taylor K."/>
            <person name="Taylor R.G."/>
            <person name="Tivey A."/>
            <person name="Walsh S.V."/>
            <person name="Warren T."/>
            <person name="Whitehead S."/>
            <person name="Woodward J.R."/>
            <person name="Volckaert G."/>
            <person name="Aert R."/>
            <person name="Robben J."/>
            <person name="Grymonprez B."/>
            <person name="Weltjens I."/>
            <person name="Vanstreels E."/>
            <person name="Rieger M."/>
            <person name="Schaefer M."/>
            <person name="Mueller-Auer S."/>
            <person name="Gabel C."/>
            <person name="Fuchs M."/>
            <person name="Duesterhoeft A."/>
            <person name="Fritzc C."/>
            <person name="Holzer E."/>
            <person name="Moestl D."/>
            <person name="Hilbert H."/>
            <person name="Borzym K."/>
            <person name="Langer I."/>
            <person name="Beck A."/>
            <person name="Lehrach H."/>
            <person name="Reinhardt R."/>
            <person name="Pohl T.M."/>
            <person name="Eger P."/>
            <person name="Zimmermann W."/>
            <person name="Wedler H."/>
            <person name="Wambutt R."/>
            <person name="Purnelle B."/>
            <person name="Goffeau A."/>
            <person name="Cadieu E."/>
            <person name="Dreano S."/>
            <person name="Gloux S."/>
            <person name="Lelaure V."/>
            <person name="Mottier S."/>
            <person name="Galibert F."/>
            <person name="Aves S.J."/>
            <person name="Xiang Z."/>
            <person name="Hunt C."/>
            <person name="Moore K."/>
            <person name="Hurst S.M."/>
            <person name="Lucas M."/>
            <person name="Rochet M."/>
            <person name="Gaillardin C."/>
            <person name="Tallada V.A."/>
            <person name="Garzon A."/>
            <person name="Thode G."/>
            <person name="Daga R.R."/>
            <person name="Cruzado L."/>
            <person name="Jimenez J."/>
            <person name="Sanchez M."/>
            <person name="del Rey F."/>
            <person name="Benito J."/>
            <person name="Dominguez A."/>
            <person name="Revuelta J.L."/>
            <person name="Moreno S."/>
            <person name="Armstrong J."/>
            <person name="Forsburg S.L."/>
            <person name="Cerutti L."/>
            <person name="Lowe T."/>
            <person name="McCombie W.R."/>
            <person name="Paulsen I."/>
            <person name="Potashkin J."/>
            <person name="Shpakovski G.V."/>
            <person name="Ussery D."/>
            <person name="Barrell B.G."/>
            <person name="Nurse P."/>
        </authorList>
    </citation>
    <scope>NUCLEOTIDE SEQUENCE [LARGE SCALE GENOMIC DNA]</scope>
    <source>
        <strain>972 / ATCC 24843</strain>
    </source>
</reference>
<reference key="2">
    <citation type="journal article" date="1983" name="Mol. Gen. Genet.">
        <title>Yeast ribosomal proteins: VII. Cytoplasmic ribosomal proteins from Schizosaccharomyces pombe.</title>
        <authorList>
            <person name="Otaka E."/>
            <person name="Higo K."/>
            <person name="Itoh T."/>
        </authorList>
    </citation>
    <scope>PROTEIN SEQUENCE OF 2-43</scope>
</reference>
<organism>
    <name type="scientific">Schizosaccharomyces pombe (strain 972 / ATCC 24843)</name>
    <name type="common">Fission yeast</name>
    <dbReference type="NCBI Taxonomy" id="284812"/>
    <lineage>
        <taxon>Eukaryota</taxon>
        <taxon>Fungi</taxon>
        <taxon>Dikarya</taxon>
        <taxon>Ascomycota</taxon>
        <taxon>Taphrinomycotina</taxon>
        <taxon>Schizosaccharomycetes</taxon>
        <taxon>Schizosaccharomycetales</taxon>
        <taxon>Schizosaccharomycetaceae</taxon>
        <taxon>Schizosaccharomyces</taxon>
    </lineage>
</organism>
<protein>
    <recommendedName>
        <fullName evidence="5">Large ribosomal subunit protein eL39</fullName>
    </recommendedName>
    <alternativeName>
        <fullName>60S ribosomal protein L39</fullName>
    </alternativeName>
    <alternativeName>
        <fullName evidence="4">SP-L36</fullName>
    </alternativeName>
</protein>
<evidence type="ECO:0000250" key="1">
    <source>
        <dbReference type="UniProtKB" id="P04650"/>
    </source>
</evidence>
<evidence type="ECO:0000256" key="2">
    <source>
        <dbReference type="SAM" id="MobiDB-lite"/>
    </source>
</evidence>
<evidence type="ECO:0000269" key="3">
    <source>
    </source>
</evidence>
<evidence type="ECO:0000303" key="4">
    <source>
    </source>
</evidence>
<evidence type="ECO:0000305" key="5"/>
<evidence type="ECO:0007829" key="6">
    <source>
        <dbReference type="PDB" id="8ETC"/>
    </source>
</evidence>
<keyword id="KW-0002">3D-structure</keyword>
<keyword id="KW-0963">Cytoplasm</keyword>
<keyword id="KW-0903">Direct protein sequencing</keyword>
<keyword id="KW-1185">Reference proteome</keyword>
<keyword id="KW-0687">Ribonucleoprotein</keyword>
<keyword id="KW-0689">Ribosomal protein</keyword>
<gene>
    <name type="primary">rpl39</name>
    <name type="ORF">SPCC663.04</name>
</gene>
<accession>P05767</accession>
<accession>O74514</accession>
<comment type="function">
    <text evidence="1">Component of the ribosome, a large ribonucleoprotein complex responsible for the synthesis of proteins in the cell. The small ribosomal subunit (SSU) binds messenger RNAs (mRNAs) and translates the encoded message by selecting cognate aminoacyl-transfer RNA (tRNA) molecules. The large subunit (LSU) contains the ribosomal catalytic site termed the peptidyl transferase center (PTC), which catalyzes the formation of peptide bonds, thereby polymerizing the amino acids delivered by tRNAs into a polypeptide chain. The nascent polypeptides leave the ribosome through a tunnel in the LSU and interact with protein factors that function in enzymatic processing, targeting, and the membrane insertion of nascent chains at the exit of the ribosomal tunnel.</text>
</comment>
<comment type="subunit">
    <text evidence="1">Component of the large ribosomal subunit (LSU). Mature yeast ribosomes consist of a small (40S) and a large (60S) subunit. The 40S small subunit contains 1 molecule of ribosomal RNA (18S rRNA) and at least 33 different proteins. The large 60S subunit contains 3 rRNA molecules (25S, 5.8S and 5S rRNA) and at least 46 different proteins. eL39 interacts with yih1.</text>
</comment>
<comment type="subcellular location">
    <subcellularLocation>
        <location evidence="1">Cytoplasm</location>
    </subcellularLocation>
</comment>
<comment type="similarity">
    <text evidence="5">Belongs to the eukaryotic ribosomal protein eL39 family.</text>
</comment>
<feature type="initiator methionine" description="Removed" evidence="3">
    <location>
        <position position="1"/>
    </location>
</feature>
<feature type="chain" id="PRO_0000127043" description="Large ribosomal subunit protein eL39">
    <location>
        <begin position="2"/>
        <end position="51"/>
    </location>
</feature>
<feature type="region of interest" description="Disordered" evidence="2">
    <location>
        <begin position="1"/>
        <end position="21"/>
    </location>
</feature>
<feature type="compositionally biased region" description="Basic residues" evidence="2">
    <location>
        <begin position="1"/>
        <end position="15"/>
    </location>
</feature>
<feature type="helix" evidence="6">
    <location>
        <begin position="7"/>
        <end position="19"/>
    </location>
</feature>
<feature type="helix" evidence="6">
    <location>
        <begin position="25"/>
        <end position="29"/>
    </location>
</feature>
<feature type="strand" evidence="6">
    <location>
        <begin position="44"/>
        <end position="47"/>
    </location>
</feature>
<proteinExistence type="evidence at protein level"/>
<sequence>MPSHKSFRTKQKLAKAARQNRPIPQWIRLRTGNTVHYNMKRRHWRRTKLNI</sequence>